<proteinExistence type="evidence at transcript level"/>
<name>CHST7_RAT</name>
<accession>Q6XQG8</accession>
<accession>Q2TA65</accession>
<evidence type="ECO:0000250" key="1"/>
<evidence type="ECO:0000250" key="2">
    <source>
        <dbReference type="UniProtKB" id="Q9NS84"/>
    </source>
</evidence>
<evidence type="ECO:0000255" key="3"/>
<evidence type="ECO:0000256" key="4">
    <source>
        <dbReference type="SAM" id="MobiDB-lite"/>
    </source>
</evidence>
<evidence type="ECO:0000305" key="5"/>
<keyword id="KW-0119">Carbohydrate metabolism</keyword>
<keyword id="KW-0325">Glycoprotein</keyword>
<keyword id="KW-0333">Golgi apparatus</keyword>
<keyword id="KW-0472">Membrane</keyword>
<keyword id="KW-0597">Phosphoprotein</keyword>
<keyword id="KW-1185">Reference proteome</keyword>
<keyword id="KW-0735">Signal-anchor</keyword>
<keyword id="KW-0808">Transferase</keyword>
<keyword id="KW-0812">Transmembrane</keyword>
<keyword id="KW-1133">Transmembrane helix</keyword>
<organism>
    <name type="scientific">Rattus norvegicus</name>
    <name type="common">Rat</name>
    <dbReference type="NCBI Taxonomy" id="10116"/>
    <lineage>
        <taxon>Eukaryota</taxon>
        <taxon>Metazoa</taxon>
        <taxon>Chordata</taxon>
        <taxon>Craniata</taxon>
        <taxon>Vertebrata</taxon>
        <taxon>Euteleostomi</taxon>
        <taxon>Mammalia</taxon>
        <taxon>Eutheria</taxon>
        <taxon>Euarchontoglires</taxon>
        <taxon>Glires</taxon>
        <taxon>Rodentia</taxon>
        <taxon>Myomorpha</taxon>
        <taxon>Muroidea</taxon>
        <taxon>Muridae</taxon>
        <taxon>Murinae</taxon>
        <taxon>Rattus</taxon>
    </lineage>
</organism>
<comment type="function">
    <text evidence="1">Sulfotransferase that utilizes 3'-phospho-5'-adenylyl sulfate (PAPS) as sulfonate donor to catalyze the transfer of sulfate to position 6 of non-reducing N-acetylglucosamine (GlcNAc) residues. Preferentially acts on mannose-linked GlcNAc. Also able to catalyze the transfer of sulfate to position 6 of the N-acetylgalactosamine (GalNAc) residue of chondroitin. Also acts on core 2 mucin-type oligosaccharide and N-acetyllactosamine oligomer with a lower efficiency. Has weak or no activity toward keratan sulfate and oligosaccharides containing the Galbeta1-4GlcNAc. Catalyzes 6-O-sulfation of beta-benzyl GlcNAc but not alpha- or beta-benzyl GalNAc (By similarity).</text>
</comment>
<comment type="catalytic activity">
    <reaction>
        <text>chondroitin beta-D-glucuronate + n 3'-phosphoadenylyl sulfate = chondroitin 6'-sulfate + n adenosine 3',5'-bisphosphate + n H(+)</text>
        <dbReference type="Rhea" id="RHEA:11108"/>
        <dbReference type="Rhea" id="RHEA-COMP:9827"/>
        <dbReference type="Rhea" id="RHEA-COMP:9828"/>
        <dbReference type="ChEBI" id="CHEBI:15378"/>
        <dbReference type="ChEBI" id="CHEBI:57652"/>
        <dbReference type="ChEBI" id="CHEBI:58339"/>
        <dbReference type="ChEBI" id="CHEBI:58343"/>
        <dbReference type="ChEBI" id="CHEBI:62065"/>
        <dbReference type="EC" id="2.8.2.17"/>
    </reaction>
</comment>
<comment type="subcellular location">
    <subcellularLocation>
        <location evidence="1">Golgi apparatus membrane</location>
        <topology evidence="1">Single-pass type II membrane protein</topology>
    </subcellularLocation>
</comment>
<comment type="similarity">
    <text evidence="5">Belongs to the sulfotransferase 1 family. Gal/GlcNAc/GalNAc subfamily.</text>
</comment>
<protein>
    <recommendedName>
        <fullName>Carbohydrate sulfotransferase 7</fullName>
        <ecNumber>2.8.2.-</ecNumber>
        <ecNumber>2.8.2.17</ecNumber>
    </recommendedName>
    <alternativeName>
        <fullName>Chondroitin 6-sulfotransferase 2</fullName>
        <shortName>C6ST-2</shortName>
    </alternativeName>
    <alternativeName>
        <fullName>Galactose/N-acetylglucosamine/N-acetylglucosamine 6-O-sulfotransferase 5</fullName>
        <shortName>GST-5</shortName>
    </alternativeName>
    <alternativeName>
        <fullName>N-acetylglucosamine 6-O-sulfotransferase 4</fullName>
        <shortName>GlcNAc6ST-4</shortName>
        <shortName>Gn6st-4</shortName>
    </alternativeName>
</protein>
<feature type="chain" id="PRO_0000085200" description="Carbohydrate sulfotransferase 7">
    <location>
        <begin position="1"/>
        <end position="485"/>
    </location>
</feature>
<feature type="topological domain" description="Cytoplasmic" evidence="3">
    <location>
        <begin position="1"/>
        <end position="12"/>
    </location>
</feature>
<feature type="transmembrane region" description="Helical; Signal-anchor for type II membrane protein" evidence="3">
    <location>
        <begin position="13"/>
        <end position="33"/>
    </location>
</feature>
<feature type="topological domain" description="Lumenal" evidence="3">
    <location>
        <begin position="34"/>
        <end position="485"/>
    </location>
</feature>
<feature type="region of interest" description="Disordered" evidence="4">
    <location>
        <begin position="66"/>
        <end position="88"/>
    </location>
</feature>
<feature type="region of interest" description="Disordered" evidence="4">
    <location>
        <begin position="465"/>
        <end position="485"/>
    </location>
</feature>
<feature type="compositionally biased region" description="Basic and acidic residues" evidence="4">
    <location>
        <begin position="465"/>
        <end position="475"/>
    </location>
</feature>
<feature type="binding site" evidence="1">
    <location>
        <begin position="109"/>
        <end position="115"/>
    </location>
    <ligand>
        <name>3'-phosphoadenylyl sulfate</name>
        <dbReference type="ChEBI" id="CHEBI:58339"/>
    </ligand>
</feature>
<feature type="binding site" evidence="1">
    <location>
        <begin position="277"/>
        <end position="285"/>
    </location>
    <ligand>
        <name>3'-phosphoadenylyl sulfate</name>
        <dbReference type="ChEBI" id="CHEBI:58339"/>
    </ligand>
</feature>
<feature type="modified residue" description="Phosphoserine" evidence="2">
    <location>
        <position position="461"/>
    </location>
</feature>
<feature type="glycosylation site" description="N-linked (GlcNAc...) asparagine" evidence="3">
    <location>
        <position position="88"/>
    </location>
</feature>
<feature type="glycosylation site" description="N-linked (GlcNAc...) asparagine" evidence="3">
    <location>
        <position position="185"/>
    </location>
</feature>
<feature type="glycosylation site" description="N-linked (GlcNAc...) asparagine" evidence="3">
    <location>
        <position position="406"/>
    </location>
</feature>
<sequence length="485" mass="55091">MKGRRRRRREYCKFTLLLALYTLLLLLVPSVLDSGSEQDKGGRDCPGLQRSLGVWSLEAAAAGEREQGAEVRFQAEGNPDRSPRPQGNLSAIRESVTQEKQHIYVHATWRTGSSFLGELFNQHPDVFYLYEPMWHLWQALYPGNAESLQGALRDMLRSLFRCDFSVLRLYAQPGDPAERAPDSANLTTAMLFRWRTNKVICSPPLCPAAPRARADVGLVEDKACESTCPPVPLRALEAECRKYPVVVIKDVRLLDLGVLVPLLRDPGLNLKVVQLFRDPRAVHNSRLKSRHGLLRESIQVLRTRQRGDRFQRVLLAHGVGARPGGQSRALPSAPRADFFLTSALEVICEAWLRDLLFTRGAPTWLRRRYLRLRYEDLVWQPQVQLRRLLRFSGLRTLAALDAFAFNMTRGSAYGADRPFHLSARDAREAVHAWRERLSQEQVRQVEAACDPAMRLLAYPRSGDERDVKTVRKGETPLETNANWAT</sequence>
<gene>
    <name type="primary">Chst7</name>
</gene>
<dbReference type="EC" id="2.8.2.-"/>
<dbReference type="EC" id="2.8.2.17"/>
<dbReference type="EMBL" id="AY216524">
    <property type="protein sequence ID" value="AAP51034.1"/>
    <property type="molecule type" value="mRNA"/>
</dbReference>
<dbReference type="EMBL" id="BC111079">
    <property type="protein sequence ID" value="AAI11080.1"/>
    <property type="molecule type" value="mRNA"/>
</dbReference>
<dbReference type="RefSeq" id="NP_997483.1">
    <property type="nucleotide sequence ID" value="NM_207600.2"/>
</dbReference>
<dbReference type="FunCoup" id="Q6XQG8">
    <property type="interactions" value="378"/>
</dbReference>
<dbReference type="STRING" id="10116.ENSRNOP00000005630"/>
<dbReference type="GlyCosmos" id="Q6XQG8">
    <property type="glycosylation" value="3 sites, No reported glycans"/>
</dbReference>
<dbReference type="GlyGen" id="Q6XQG8">
    <property type="glycosylation" value="3 sites"/>
</dbReference>
<dbReference type="PhosphoSitePlus" id="Q6XQG8"/>
<dbReference type="PaxDb" id="10116-ENSRNOP00000005630"/>
<dbReference type="Ensembl" id="ENSRNOT00000005630.6">
    <property type="protein sequence ID" value="ENSRNOP00000005630.4"/>
    <property type="gene ID" value="ENSRNOG00000004258.6"/>
</dbReference>
<dbReference type="GeneID" id="302302"/>
<dbReference type="KEGG" id="rno:302302"/>
<dbReference type="UCSC" id="RGD:1303028">
    <property type="organism name" value="rat"/>
</dbReference>
<dbReference type="AGR" id="RGD:1303028"/>
<dbReference type="CTD" id="56548"/>
<dbReference type="RGD" id="1303028">
    <property type="gene designation" value="Chst7"/>
</dbReference>
<dbReference type="eggNOG" id="ENOG502QRPV">
    <property type="taxonomic scope" value="Eukaryota"/>
</dbReference>
<dbReference type="GeneTree" id="ENSGT00940000162231"/>
<dbReference type="HOGENOM" id="CLU_028381_1_0_1"/>
<dbReference type="InParanoid" id="Q6XQG8"/>
<dbReference type="OMA" id="WKMNKVI"/>
<dbReference type="OrthoDB" id="6138663at2759"/>
<dbReference type="PhylomeDB" id="Q6XQG8"/>
<dbReference type="TreeFam" id="TF342871"/>
<dbReference type="Reactome" id="R-RNO-2022870">
    <property type="pathway name" value="Chondroitin sulfate biosynthesis"/>
</dbReference>
<dbReference type="PRO" id="PR:Q6XQG8"/>
<dbReference type="Proteomes" id="UP000002494">
    <property type="component" value="Chromosome X"/>
</dbReference>
<dbReference type="Bgee" id="ENSRNOG00000004258">
    <property type="expression patterns" value="Expressed in cerebellum and 16 other cell types or tissues"/>
</dbReference>
<dbReference type="GO" id="GO:0005794">
    <property type="term" value="C:Golgi apparatus"/>
    <property type="evidence" value="ECO:0000266"/>
    <property type="project" value="RGD"/>
</dbReference>
<dbReference type="GO" id="GO:0000139">
    <property type="term" value="C:Golgi membrane"/>
    <property type="evidence" value="ECO:0007669"/>
    <property type="project" value="UniProtKB-SubCell"/>
</dbReference>
<dbReference type="GO" id="GO:0008459">
    <property type="term" value="F:chondroitin 6-sulfotransferase activity"/>
    <property type="evidence" value="ECO:0000266"/>
    <property type="project" value="RGD"/>
</dbReference>
<dbReference type="GO" id="GO:0001517">
    <property type="term" value="F:N-acetylglucosamine 6-O-sulfotransferase activity"/>
    <property type="evidence" value="ECO:0000266"/>
    <property type="project" value="RGD"/>
</dbReference>
<dbReference type="GO" id="GO:0005975">
    <property type="term" value="P:carbohydrate metabolic process"/>
    <property type="evidence" value="ECO:0007669"/>
    <property type="project" value="InterPro"/>
</dbReference>
<dbReference type="GO" id="GO:0050650">
    <property type="term" value="P:chondroitin sulfate proteoglycan biosynthetic process"/>
    <property type="evidence" value="ECO:0007669"/>
    <property type="project" value="Ensembl"/>
</dbReference>
<dbReference type="GO" id="GO:0006044">
    <property type="term" value="P:N-acetylglucosamine metabolic process"/>
    <property type="evidence" value="ECO:0000266"/>
    <property type="project" value="RGD"/>
</dbReference>
<dbReference type="GO" id="GO:0006790">
    <property type="term" value="P:sulfur compound metabolic process"/>
    <property type="evidence" value="ECO:0000266"/>
    <property type="project" value="RGD"/>
</dbReference>
<dbReference type="Gene3D" id="3.40.50.300">
    <property type="entry name" value="P-loop containing nucleotide triphosphate hydrolases"/>
    <property type="match status" value="1"/>
</dbReference>
<dbReference type="InterPro" id="IPR016469">
    <property type="entry name" value="Carbohydrate_sulfotransferase"/>
</dbReference>
<dbReference type="InterPro" id="IPR051135">
    <property type="entry name" value="Gal/GlcNAc/GalNAc_ST"/>
</dbReference>
<dbReference type="InterPro" id="IPR027417">
    <property type="entry name" value="P-loop_NTPase"/>
</dbReference>
<dbReference type="InterPro" id="IPR000863">
    <property type="entry name" value="Sulfotransferase_dom"/>
</dbReference>
<dbReference type="PANTHER" id="PTHR10704">
    <property type="entry name" value="CARBOHYDRATE SULFOTRANSFERASE"/>
    <property type="match status" value="1"/>
</dbReference>
<dbReference type="PANTHER" id="PTHR10704:SF5">
    <property type="entry name" value="CARBOHYDRATE SULFOTRANSFERASE 7"/>
    <property type="match status" value="1"/>
</dbReference>
<dbReference type="Pfam" id="PF00685">
    <property type="entry name" value="Sulfotransfer_1"/>
    <property type="match status" value="1"/>
</dbReference>
<dbReference type="PIRSF" id="PIRSF005883">
    <property type="entry name" value="Carbohydrate_sulfotransferase"/>
    <property type="match status" value="1"/>
</dbReference>
<dbReference type="SUPFAM" id="SSF52540">
    <property type="entry name" value="P-loop containing nucleoside triphosphate hydrolases"/>
    <property type="match status" value="1"/>
</dbReference>
<reference key="1">
    <citation type="submission" date="2003-01" db="EMBL/GenBank/DDBJ databases">
        <authorList>
            <person name="Seko A."/>
            <person name="Yamashita K."/>
        </authorList>
    </citation>
    <scope>NUCLEOTIDE SEQUENCE [MRNA]</scope>
    <source>
        <strain>Wistar</strain>
    </source>
</reference>
<reference key="2">
    <citation type="journal article" date="2004" name="Genome Res.">
        <title>The status, quality, and expansion of the NIH full-length cDNA project: the Mammalian Gene Collection (MGC).</title>
        <authorList>
            <consortium name="The MGC Project Team"/>
        </authorList>
    </citation>
    <scope>NUCLEOTIDE SEQUENCE [LARGE SCALE MRNA]</scope>
    <source>
        <tissue>Thymus</tissue>
    </source>
</reference>